<evidence type="ECO:0000250" key="1"/>
<evidence type="ECO:0000255" key="2">
    <source>
        <dbReference type="HAMAP-Rule" id="MF_00492"/>
    </source>
</evidence>
<feature type="chain" id="PRO_0000230972" description="Transaldolase">
    <location>
        <begin position="1"/>
        <end position="317"/>
    </location>
</feature>
<feature type="active site" description="Schiff-base intermediate with substrate" evidence="2">
    <location>
        <position position="132"/>
    </location>
</feature>
<accession>Q32KB0</accession>
<dbReference type="EC" id="2.2.1.2" evidence="2"/>
<dbReference type="EMBL" id="CP000034">
    <property type="protein sequence ID" value="ABB60248.1"/>
    <property type="molecule type" value="Genomic_DNA"/>
</dbReference>
<dbReference type="RefSeq" id="WP_000130187.1">
    <property type="nucleotide sequence ID" value="NC_007606.1"/>
</dbReference>
<dbReference type="RefSeq" id="YP_401736.1">
    <property type="nucleotide sequence ID" value="NC_007606.1"/>
</dbReference>
<dbReference type="SMR" id="Q32KB0"/>
<dbReference type="STRING" id="300267.SDY_0008"/>
<dbReference type="EnsemblBacteria" id="ABB60248">
    <property type="protein sequence ID" value="ABB60248"/>
    <property type="gene ID" value="SDY_0008"/>
</dbReference>
<dbReference type="GeneID" id="86862525"/>
<dbReference type="KEGG" id="sdy:SDY_0008"/>
<dbReference type="PATRIC" id="fig|300267.13.peg.8"/>
<dbReference type="HOGENOM" id="CLU_047470_0_1_6"/>
<dbReference type="UniPathway" id="UPA00115">
    <property type="reaction ID" value="UER00414"/>
</dbReference>
<dbReference type="Proteomes" id="UP000002716">
    <property type="component" value="Chromosome"/>
</dbReference>
<dbReference type="GO" id="GO:0005829">
    <property type="term" value="C:cytosol"/>
    <property type="evidence" value="ECO:0007669"/>
    <property type="project" value="TreeGrafter"/>
</dbReference>
<dbReference type="GO" id="GO:0004801">
    <property type="term" value="F:transaldolase activity"/>
    <property type="evidence" value="ECO:0000250"/>
    <property type="project" value="UniProtKB"/>
</dbReference>
<dbReference type="GO" id="GO:0005975">
    <property type="term" value="P:carbohydrate metabolic process"/>
    <property type="evidence" value="ECO:0007669"/>
    <property type="project" value="InterPro"/>
</dbReference>
<dbReference type="GO" id="GO:0006098">
    <property type="term" value="P:pentose-phosphate shunt"/>
    <property type="evidence" value="ECO:0007669"/>
    <property type="project" value="UniProtKB-UniRule"/>
</dbReference>
<dbReference type="CDD" id="cd00957">
    <property type="entry name" value="Transaldolase_TalAB"/>
    <property type="match status" value="1"/>
</dbReference>
<dbReference type="FunFam" id="3.20.20.70:FF:000002">
    <property type="entry name" value="Transaldolase"/>
    <property type="match status" value="1"/>
</dbReference>
<dbReference type="Gene3D" id="3.20.20.70">
    <property type="entry name" value="Aldolase class I"/>
    <property type="match status" value="1"/>
</dbReference>
<dbReference type="HAMAP" id="MF_00492">
    <property type="entry name" value="Transaldolase_1"/>
    <property type="match status" value="1"/>
</dbReference>
<dbReference type="InterPro" id="IPR013785">
    <property type="entry name" value="Aldolase_TIM"/>
</dbReference>
<dbReference type="InterPro" id="IPR001585">
    <property type="entry name" value="TAL/FSA"/>
</dbReference>
<dbReference type="InterPro" id="IPR004730">
    <property type="entry name" value="Transaldolase_1"/>
</dbReference>
<dbReference type="InterPro" id="IPR018225">
    <property type="entry name" value="Transaldolase_AS"/>
</dbReference>
<dbReference type="NCBIfam" id="NF009001">
    <property type="entry name" value="PRK12346.1"/>
    <property type="match status" value="1"/>
</dbReference>
<dbReference type="NCBIfam" id="TIGR00874">
    <property type="entry name" value="talAB"/>
    <property type="match status" value="1"/>
</dbReference>
<dbReference type="PANTHER" id="PTHR10683">
    <property type="entry name" value="TRANSALDOLASE"/>
    <property type="match status" value="1"/>
</dbReference>
<dbReference type="PANTHER" id="PTHR10683:SF18">
    <property type="entry name" value="TRANSALDOLASE"/>
    <property type="match status" value="1"/>
</dbReference>
<dbReference type="Pfam" id="PF00923">
    <property type="entry name" value="TAL_FSA"/>
    <property type="match status" value="1"/>
</dbReference>
<dbReference type="SUPFAM" id="SSF51569">
    <property type="entry name" value="Aldolase"/>
    <property type="match status" value="1"/>
</dbReference>
<dbReference type="PROSITE" id="PS01054">
    <property type="entry name" value="TRANSALDOLASE_1"/>
    <property type="match status" value="1"/>
</dbReference>
<dbReference type="PROSITE" id="PS00958">
    <property type="entry name" value="TRANSALDOLASE_2"/>
    <property type="match status" value="1"/>
</dbReference>
<gene>
    <name evidence="2" type="primary">tal</name>
    <name type="ordered locus">SDY_0008</name>
</gene>
<comment type="function">
    <text evidence="2">Transaldolase is important for the balance of metabolites in the pentose-phosphate pathway.</text>
</comment>
<comment type="catalytic activity">
    <reaction evidence="2">
        <text>D-sedoheptulose 7-phosphate + D-glyceraldehyde 3-phosphate = D-erythrose 4-phosphate + beta-D-fructose 6-phosphate</text>
        <dbReference type="Rhea" id="RHEA:17053"/>
        <dbReference type="ChEBI" id="CHEBI:16897"/>
        <dbReference type="ChEBI" id="CHEBI:57483"/>
        <dbReference type="ChEBI" id="CHEBI:57634"/>
        <dbReference type="ChEBI" id="CHEBI:59776"/>
        <dbReference type="EC" id="2.2.1.2"/>
    </reaction>
</comment>
<comment type="pathway">
    <text evidence="2">Carbohydrate degradation; pentose phosphate pathway; D-glyceraldehyde 3-phosphate and beta-D-fructose 6-phosphate from D-ribose 5-phosphate and D-xylulose 5-phosphate (non-oxidative stage): step 2/3.</text>
</comment>
<comment type="subunit">
    <text evidence="1">Homodimer.</text>
</comment>
<comment type="subcellular location">
    <subcellularLocation>
        <location evidence="2">Cytoplasm</location>
    </subcellularLocation>
</comment>
<comment type="similarity">
    <text evidence="2">Belongs to the transaldolase family. Type 1 subfamily.</text>
</comment>
<sequence>MTDKLTSLRQYTTVVADTGDIAAMKLYQPQDATTNPSLILNAAQIPEYRKLIDDAVAWAKQQSNDRAQQIVDATDKLAVNIGLEILKLVPGRISTEVDARLSYDTEASIAKAKRLIKLYNDAGISNDRILIKLASTWQGIRAAEQLEKEGINCNLTLLFSFAQARACAEAGVFLISPFVGRILDWYKANTDKKEYAPAEDPGVVSVSEIYQYYKEHGYETVVMGASFRNIGEILELAGCDRLTIAPALLKELAESEGAIERKLSYTGEVKARPARITESEFLWQHNQDPMAVDKLAEGIRKFAVDQEKLEKMIGDLL</sequence>
<name>TAL_SHIDS</name>
<keyword id="KW-0963">Cytoplasm</keyword>
<keyword id="KW-0570">Pentose shunt</keyword>
<keyword id="KW-1185">Reference proteome</keyword>
<keyword id="KW-0704">Schiff base</keyword>
<keyword id="KW-0808">Transferase</keyword>
<proteinExistence type="inferred from homology"/>
<organism>
    <name type="scientific">Shigella dysenteriae serotype 1 (strain Sd197)</name>
    <dbReference type="NCBI Taxonomy" id="300267"/>
    <lineage>
        <taxon>Bacteria</taxon>
        <taxon>Pseudomonadati</taxon>
        <taxon>Pseudomonadota</taxon>
        <taxon>Gammaproteobacteria</taxon>
        <taxon>Enterobacterales</taxon>
        <taxon>Enterobacteriaceae</taxon>
        <taxon>Shigella</taxon>
    </lineage>
</organism>
<protein>
    <recommendedName>
        <fullName evidence="2">Transaldolase</fullName>
        <ecNumber evidence="2">2.2.1.2</ecNumber>
    </recommendedName>
</protein>
<reference key="1">
    <citation type="journal article" date="2005" name="Nucleic Acids Res.">
        <title>Genome dynamics and diversity of Shigella species, the etiologic agents of bacillary dysentery.</title>
        <authorList>
            <person name="Yang F."/>
            <person name="Yang J."/>
            <person name="Zhang X."/>
            <person name="Chen L."/>
            <person name="Jiang Y."/>
            <person name="Yan Y."/>
            <person name="Tang X."/>
            <person name="Wang J."/>
            <person name="Xiong Z."/>
            <person name="Dong J."/>
            <person name="Xue Y."/>
            <person name="Zhu Y."/>
            <person name="Xu X."/>
            <person name="Sun L."/>
            <person name="Chen S."/>
            <person name="Nie H."/>
            <person name="Peng J."/>
            <person name="Xu J."/>
            <person name="Wang Y."/>
            <person name="Yuan Z."/>
            <person name="Wen Y."/>
            <person name="Yao Z."/>
            <person name="Shen Y."/>
            <person name="Qiang B."/>
            <person name="Hou Y."/>
            <person name="Yu J."/>
            <person name="Jin Q."/>
        </authorList>
    </citation>
    <scope>NUCLEOTIDE SEQUENCE [LARGE SCALE GENOMIC DNA]</scope>
    <source>
        <strain>Sd197</strain>
    </source>
</reference>